<feature type="chain" id="PRO_0000196952" description="2,3,4,5-tetrahydropyridine-2,6-dicarboxylate N-succinyltransferase">
    <location>
        <begin position="1"/>
        <end position="273"/>
    </location>
</feature>
<feature type="binding site" evidence="1">
    <location>
        <position position="104"/>
    </location>
    <ligand>
        <name>substrate</name>
    </ligand>
</feature>
<feature type="binding site" evidence="1">
    <location>
        <position position="141"/>
    </location>
    <ligand>
        <name>substrate</name>
    </ligand>
</feature>
<proteinExistence type="inferred from homology"/>
<organism>
    <name type="scientific">Neisseria meningitidis serogroup B (strain ATCC BAA-335 / MC58)</name>
    <dbReference type="NCBI Taxonomy" id="122586"/>
    <lineage>
        <taxon>Bacteria</taxon>
        <taxon>Pseudomonadati</taxon>
        <taxon>Pseudomonadota</taxon>
        <taxon>Betaproteobacteria</taxon>
        <taxon>Neisseriales</taxon>
        <taxon>Neisseriaceae</taxon>
        <taxon>Neisseria</taxon>
    </lineage>
</organism>
<dbReference type="EC" id="2.3.1.117" evidence="1"/>
<dbReference type="EMBL" id="AE002098">
    <property type="protein sequence ID" value="AAF40778.1"/>
    <property type="molecule type" value="Genomic_DNA"/>
</dbReference>
<dbReference type="PIR" id="B81211">
    <property type="entry name" value="B81211"/>
</dbReference>
<dbReference type="RefSeq" id="NP_273384.1">
    <property type="nucleotide sequence ID" value="NC_003112.2"/>
</dbReference>
<dbReference type="RefSeq" id="WP_002224875.1">
    <property type="nucleotide sequence ID" value="NC_003112.2"/>
</dbReference>
<dbReference type="SMR" id="Q9K152"/>
<dbReference type="FunCoup" id="Q9K152">
    <property type="interactions" value="241"/>
</dbReference>
<dbReference type="STRING" id="122586.NMB0335"/>
<dbReference type="PaxDb" id="122586-NMB0335"/>
<dbReference type="GeneID" id="86929670"/>
<dbReference type="KEGG" id="nme:NMB0335"/>
<dbReference type="PATRIC" id="fig|122586.8.peg.424"/>
<dbReference type="HOGENOM" id="CLU_050859_0_1_4"/>
<dbReference type="InParanoid" id="Q9K152"/>
<dbReference type="OrthoDB" id="9775362at2"/>
<dbReference type="UniPathway" id="UPA00034">
    <property type="reaction ID" value="UER00019"/>
</dbReference>
<dbReference type="Proteomes" id="UP000000425">
    <property type="component" value="Chromosome"/>
</dbReference>
<dbReference type="GO" id="GO:0005737">
    <property type="term" value="C:cytoplasm"/>
    <property type="evidence" value="ECO:0007669"/>
    <property type="project" value="UniProtKB-SubCell"/>
</dbReference>
<dbReference type="GO" id="GO:0008666">
    <property type="term" value="F:2,3,4,5-tetrahydropyridine-2,6-dicarboxylate N-succinyltransferase activity"/>
    <property type="evidence" value="ECO:0007669"/>
    <property type="project" value="UniProtKB-UniRule"/>
</dbReference>
<dbReference type="GO" id="GO:0016779">
    <property type="term" value="F:nucleotidyltransferase activity"/>
    <property type="evidence" value="ECO:0000318"/>
    <property type="project" value="GO_Central"/>
</dbReference>
<dbReference type="GO" id="GO:0019877">
    <property type="term" value="P:diaminopimelate biosynthetic process"/>
    <property type="evidence" value="ECO:0000318"/>
    <property type="project" value="GO_Central"/>
</dbReference>
<dbReference type="GO" id="GO:0009085">
    <property type="term" value="P:lysine biosynthetic process"/>
    <property type="evidence" value="ECO:0000318"/>
    <property type="project" value="GO_Central"/>
</dbReference>
<dbReference type="GO" id="GO:0009089">
    <property type="term" value="P:lysine biosynthetic process via diaminopimelate"/>
    <property type="evidence" value="ECO:0007669"/>
    <property type="project" value="UniProtKB-UniRule"/>
</dbReference>
<dbReference type="CDD" id="cd03350">
    <property type="entry name" value="LbH_THP_succinylT"/>
    <property type="match status" value="1"/>
</dbReference>
<dbReference type="Gene3D" id="2.160.10.10">
    <property type="entry name" value="Hexapeptide repeat proteins"/>
    <property type="match status" value="1"/>
</dbReference>
<dbReference type="Gene3D" id="1.10.166.10">
    <property type="entry name" value="Tetrahydrodipicolinate-N-succinyltransferase, N-terminal domain"/>
    <property type="match status" value="1"/>
</dbReference>
<dbReference type="HAMAP" id="MF_00811">
    <property type="entry name" value="DapD"/>
    <property type="match status" value="1"/>
</dbReference>
<dbReference type="InterPro" id="IPR005664">
    <property type="entry name" value="DapD_Trfase_Hexpep_rpt_fam"/>
</dbReference>
<dbReference type="InterPro" id="IPR001451">
    <property type="entry name" value="Hexapep"/>
</dbReference>
<dbReference type="InterPro" id="IPR018357">
    <property type="entry name" value="Hexapep_transf_CS"/>
</dbReference>
<dbReference type="InterPro" id="IPR023180">
    <property type="entry name" value="THP_succinylTrfase_dom1"/>
</dbReference>
<dbReference type="InterPro" id="IPR037133">
    <property type="entry name" value="THP_succinylTrfase_N_sf"/>
</dbReference>
<dbReference type="InterPro" id="IPR011004">
    <property type="entry name" value="Trimer_LpxA-like_sf"/>
</dbReference>
<dbReference type="NCBIfam" id="TIGR00965">
    <property type="entry name" value="dapD"/>
    <property type="match status" value="1"/>
</dbReference>
<dbReference type="NCBIfam" id="NF008808">
    <property type="entry name" value="PRK11830.1"/>
    <property type="match status" value="1"/>
</dbReference>
<dbReference type="PANTHER" id="PTHR19136:SF52">
    <property type="entry name" value="2,3,4,5-TETRAHYDROPYRIDINE-2,6-DICARBOXYLATE N-SUCCINYLTRANSFERASE"/>
    <property type="match status" value="1"/>
</dbReference>
<dbReference type="PANTHER" id="PTHR19136">
    <property type="entry name" value="MOLYBDENUM COFACTOR GUANYLYLTRANSFERASE"/>
    <property type="match status" value="1"/>
</dbReference>
<dbReference type="Pfam" id="PF14602">
    <property type="entry name" value="Hexapep_2"/>
    <property type="match status" value="1"/>
</dbReference>
<dbReference type="Pfam" id="PF14805">
    <property type="entry name" value="THDPS_N_2"/>
    <property type="match status" value="1"/>
</dbReference>
<dbReference type="SUPFAM" id="SSF51161">
    <property type="entry name" value="Trimeric LpxA-like enzymes"/>
    <property type="match status" value="1"/>
</dbReference>
<dbReference type="PROSITE" id="PS00101">
    <property type="entry name" value="HEXAPEP_TRANSFERASES"/>
    <property type="match status" value="1"/>
</dbReference>
<sequence length="273" mass="29410">MSLQNIIETAFENRADITPTTVTPEVKEAVLETIRQLDSGKLRVAERLGVGEWKVNEWAKKAVLLSFRIQDNEVLNDGVNKYFDKVPTKFADWSEDEFKNAGFRAVPGAVARRGSFVAKNVVLMPSYVNIGAYVDEGAMVDTWATVGSCAQIGKNVHLSGGVGIGGVLEPLQAAPTIIEDNCFIGARSEIVEGVIVEEGSVISMGVFIGQSTKIFDRTTGEIYQGRVPAGSVVVSGSMPSKDGSHSLYCAVIVKRVDAQTRAKTSVNELLRGI</sequence>
<gene>
    <name evidence="1" type="primary">dapD</name>
    <name type="ordered locus">NMB0335</name>
</gene>
<reference key="1">
    <citation type="journal article" date="2000" name="Science">
        <title>Complete genome sequence of Neisseria meningitidis serogroup B strain MC58.</title>
        <authorList>
            <person name="Tettelin H."/>
            <person name="Saunders N.J."/>
            <person name="Heidelberg J.F."/>
            <person name="Jeffries A.C."/>
            <person name="Nelson K.E."/>
            <person name="Eisen J.A."/>
            <person name="Ketchum K.A."/>
            <person name="Hood D.W."/>
            <person name="Peden J.F."/>
            <person name="Dodson R.J."/>
            <person name="Nelson W.C."/>
            <person name="Gwinn M.L."/>
            <person name="DeBoy R.T."/>
            <person name="Peterson J.D."/>
            <person name="Hickey E.K."/>
            <person name="Haft D.H."/>
            <person name="Salzberg S.L."/>
            <person name="White O."/>
            <person name="Fleischmann R.D."/>
            <person name="Dougherty B.A."/>
            <person name="Mason T.M."/>
            <person name="Ciecko A."/>
            <person name="Parksey D.S."/>
            <person name="Blair E."/>
            <person name="Cittone H."/>
            <person name="Clark E.B."/>
            <person name="Cotton M.D."/>
            <person name="Utterback T.R."/>
            <person name="Khouri H.M."/>
            <person name="Qin H."/>
            <person name="Vamathevan J.J."/>
            <person name="Gill J."/>
            <person name="Scarlato V."/>
            <person name="Masignani V."/>
            <person name="Pizza M."/>
            <person name="Grandi G."/>
            <person name="Sun L."/>
            <person name="Smith H.O."/>
            <person name="Fraser C.M."/>
            <person name="Moxon E.R."/>
            <person name="Rappuoli R."/>
            <person name="Venter J.C."/>
        </authorList>
    </citation>
    <scope>NUCLEOTIDE SEQUENCE [LARGE SCALE GENOMIC DNA]</scope>
    <source>
        <strain>ATCC BAA-335 / MC58</strain>
    </source>
</reference>
<evidence type="ECO:0000255" key="1">
    <source>
        <dbReference type="HAMAP-Rule" id="MF_00811"/>
    </source>
</evidence>
<keyword id="KW-0012">Acyltransferase</keyword>
<keyword id="KW-0028">Amino-acid biosynthesis</keyword>
<keyword id="KW-0963">Cytoplasm</keyword>
<keyword id="KW-0220">Diaminopimelate biosynthesis</keyword>
<keyword id="KW-0457">Lysine biosynthesis</keyword>
<keyword id="KW-1185">Reference proteome</keyword>
<keyword id="KW-0677">Repeat</keyword>
<keyword id="KW-0808">Transferase</keyword>
<comment type="catalytic activity">
    <reaction evidence="1">
        <text>(S)-2,3,4,5-tetrahydrodipicolinate + succinyl-CoA + H2O = (S)-2-succinylamino-6-oxoheptanedioate + CoA</text>
        <dbReference type="Rhea" id="RHEA:17325"/>
        <dbReference type="ChEBI" id="CHEBI:15377"/>
        <dbReference type="ChEBI" id="CHEBI:15685"/>
        <dbReference type="ChEBI" id="CHEBI:16845"/>
        <dbReference type="ChEBI" id="CHEBI:57287"/>
        <dbReference type="ChEBI" id="CHEBI:57292"/>
        <dbReference type="EC" id="2.3.1.117"/>
    </reaction>
</comment>
<comment type="pathway">
    <text evidence="1">Amino-acid biosynthesis; L-lysine biosynthesis via DAP pathway; LL-2,6-diaminopimelate from (S)-tetrahydrodipicolinate (succinylase route): step 1/3.</text>
</comment>
<comment type="subunit">
    <text evidence="1">Homotrimer.</text>
</comment>
<comment type="subcellular location">
    <subcellularLocation>
        <location evidence="1">Cytoplasm</location>
    </subcellularLocation>
</comment>
<comment type="similarity">
    <text evidence="1">Belongs to the transferase hexapeptide repeat family.</text>
</comment>
<name>DAPD_NEIMB</name>
<protein>
    <recommendedName>
        <fullName evidence="1">2,3,4,5-tetrahydropyridine-2,6-dicarboxylate N-succinyltransferase</fullName>
        <ecNumber evidence="1">2.3.1.117</ecNumber>
    </recommendedName>
    <alternativeName>
        <fullName evidence="1">Tetrahydrodipicolinate N-succinyltransferase</fullName>
        <shortName evidence="1">THDP succinyltransferase</shortName>
        <shortName evidence="1">THP succinyltransferase</shortName>
        <shortName evidence="1">Tetrahydropicolinate succinylase</shortName>
    </alternativeName>
</protein>
<accession>Q9K152</accession>